<feature type="chain" id="PRO_0000200673" description="Nodulation efficiency protein NfeD">
    <location>
        <begin position="1"/>
        <end position="320"/>
    </location>
</feature>
<gene>
    <name evidence="2" type="primary">nfeD</name>
</gene>
<geneLocation type="plasmid">
    <name>pRmeGR4b</name>
</geneLocation>
<comment type="function">
    <text evidence="1">Seems to be involved in the nodulation efficiency of R.meliloti GR4 on alfalfa roots.</text>
</comment>
<comment type="disruption phenotype">
    <text evidence="1">Cells lacking this gene show an impaired nodulation efficiency as compared to that of the wild-type strain GR4.</text>
</comment>
<comment type="similarity">
    <text evidence="3">Belongs to the ornithine cyclodeaminase/mu-crystallin family.</text>
</comment>
<name>NFED_RHIML</name>
<accession>P33728</accession>
<keyword id="KW-0520">NAD</keyword>
<keyword id="KW-0560">Oxidoreductase</keyword>
<keyword id="KW-0614">Plasmid</keyword>
<reference key="1">
    <citation type="journal article" date="1994" name="Mol. Plant Microbe Interact.">
        <title>Identification of a novel Rhizobium meliloti nodulation efficiency nfe gene homolog of Agrobacterium ornithine cyclodeaminase.</title>
        <authorList>
            <person name="Soto M.J."/>
            <person name="Zorzano A."/>
            <person name="Garcia-Rodriguez F.M."/>
            <person name="Mercado-Blanco J."/>
            <person name="Lopez-Lara I.M."/>
            <person name="Olivares J."/>
            <person name="Toro N."/>
        </authorList>
    </citation>
    <scope>NUCLEOTIDE SEQUENCE [GENOMIC DNA]</scope>
    <scope>FUNCTION</scope>
    <scope>DISRUPTION PHENOTYPE</scope>
    <source>
        <strain>GR4</strain>
    </source>
</reference>
<organism>
    <name type="scientific">Rhizobium meliloti</name>
    <name type="common">Ensifer meliloti</name>
    <name type="synonym">Sinorhizobium meliloti</name>
    <dbReference type="NCBI Taxonomy" id="382"/>
    <lineage>
        <taxon>Bacteria</taxon>
        <taxon>Pseudomonadati</taxon>
        <taxon>Pseudomonadota</taxon>
        <taxon>Alphaproteobacteria</taxon>
        <taxon>Hyphomicrobiales</taxon>
        <taxon>Rhizobiaceae</taxon>
        <taxon>Sinorhizobium/Ensifer group</taxon>
        <taxon>Sinorhizobium</taxon>
    </lineage>
</organism>
<proteinExistence type="inferred from homology"/>
<protein>
    <recommendedName>
        <fullName evidence="2">Nodulation efficiency protein NfeD</fullName>
        <ecNumber evidence="3">1.-.-.-</ecNumber>
    </recommendedName>
</protein>
<evidence type="ECO:0000269" key="1">
    <source>
    </source>
</evidence>
<evidence type="ECO:0000303" key="2">
    <source>
    </source>
</evidence>
<evidence type="ECO:0000305" key="3"/>
<sequence>MIAPVRWLSRKDVALVNLPFASALNIIEVTLRDHGNGAFENPPKIGIHPRHDALIHAMPGWLPTQRRAGLKWIATYSSNRSVGLPSITGLLVLNDPDTGLPVCVMDAAYLTAVRTAAASAVTSKYLSPSHVRKIAVIGAGIQGLYHVEMLSLVHPAAEFHIVDIDDDAVRLLAQMVRSKARIVPVKEAEIAIRTADVVVTATSQLEEVAFQFSWVKEGSLVLPVHPRGWSEDITTASEVLLADDVAQFASYIMALGSPYRDISRVLGSVSDVITGQVTGRANDSDRIAVFNLGIAVHDVAIGSAIFDIAEQLGLGTIVSY</sequence>
<dbReference type="EC" id="1.-.-.-" evidence="3"/>
<dbReference type="EMBL" id="X64613">
    <property type="protein sequence ID" value="CAA45892.1"/>
    <property type="molecule type" value="Genomic_DNA"/>
</dbReference>
<dbReference type="PIR" id="S33172">
    <property type="entry name" value="S33172"/>
</dbReference>
<dbReference type="RefSeq" id="WP_015241665.1">
    <property type="nucleotide sequence ID" value="NZ_RPLX01000153.1"/>
</dbReference>
<dbReference type="SMR" id="P33728"/>
<dbReference type="GO" id="GO:0005737">
    <property type="term" value="C:cytoplasm"/>
    <property type="evidence" value="ECO:0007669"/>
    <property type="project" value="TreeGrafter"/>
</dbReference>
<dbReference type="GO" id="GO:0016491">
    <property type="term" value="F:oxidoreductase activity"/>
    <property type="evidence" value="ECO:0007669"/>
    <property type="project" value="UniProtKB-KW"/>
</dbReference>
<dbReference type="Gene3D" id="3.40.50.720">
    <property type="entry name" value="NAD(P)-binding Rossmann-like Domain"/>
    <property type="match status" value="1"/>
</dbReference>
<dbReference type="Gene3D" id="3.30.1780.10">
    <property type="entry name" value="ornithine cyclodeaminase, domain 1"/>
    <property type="match status" value="1"/>
</dbReference>
<dbReference type="InterPro" id="IPR036291">
    <property type="entry name" value="NAD(P)-bd_dom_sf"/>
</dbReference>
<dbReference type="InterPro" id="IPR003462">
    <property type="entry name" value="ODC_Mu_crystall"/>
</dbReference>
<dbReference type="InterPro" id="IPR023401">
    <property type="entry name" value="ODC_N"/>
</dbReference>
<dbReference type="PANTHER" id="PTHR13812">
    <property type="entry name" value="KETIMINE REDUCTASE MU-CRYSTALLIN"/>
    <property type="match status" value="1"/>
</dbReference>
<dbReference type="PANTHER" id="PTHR13812:SF19">
    <property type="entry name" value="KETIMINE REDUCTASE MU-CRYSTALLIN"/>
    <property type="match status" value="1"/>
</dbReference>
<dbReference type="Pfam" id="PF02423">
    <property type="entry name" value="OCD_Mu_crystall"/>
    <property type="match status" value="1"/>
</dbReference>
<dbReference type="PIRSF" id="PIRSF001439">
    <property type="entry name" value="CryM"/>
    <property type="match status" value="1"/>
</dbReference>
<dbReference type="SUPFAM" id="SSF51735">
    <property type="entry name" value="NAD(P)-binding Rossmann-fold domains"/>
    <property type="match status" value="1"/>
</dbReference>